<protein>
    <recommendedName>
        <fullName>Ankyrin repeat domain-containing protein OPG015</fullName>
    </recommendedName>
</protein>
<dbReference type="EMBL" id="MT903340">
    <property type="protein sequence ID" value="QNP12878.1"/>
    <property type="molecule type" value="Genomic_DNA"/>
</dbReference>
<dbReference type="EMBL" id="MT903340">
    <property type="protein sequence ID" value="QNP13052.1"/>
    <property type="molecule type" value="Genomic_DNA"/>
</dbReference>
<dbReference type="RefSeq" id="YP_010377005.1">
    <property type="nucleotide sequence ID" value="NC_063383.1"/>
</dbReference>
<dbReference type="RefSeq" id="YP_010377179.1">
    <property type="nucleotide sequence ID" value="NC_063383.1"/>
</dbReference>
<dbReference type="SMR" id="A0A7H0DNG9"/>
<dbReference type="GeneID" id="72551420"/>
<dbReference type="GeneID" id="72551592"/>
<dbReference type="Proteomes" id="UP000516359">
    <property type="component" value="Genome"/>
</dbReference>
<dbReference type="Gene3D" id="1.25.40.20">
    <property type="entry name" value="Ankyrin repeat-containing domain"/>
    <property type="match status" value="1"/>
</dbReference>
<dbReference type="InterPro" id="IPR051637">
    <property type="entry name" value="Ank_repeat_dom-contain_49"/>
</dbReference>
<dbReference type="InterPro" id="IPR002110">
    <property type="entry name" value="Ankyrin_rpt"/>
</dbReference>
<dbReference type="InterPro" id="IPR036770">
    <property type="entry name" value="Ankyrin_rpt-contain_sf"/>
</dbReference>
<dbReference type="InterPro" id="IPR018272">
    <property type="entry name" value="PRANC_domain"/>
</dbReference>
<dbReference type="PANTHER" id="PTHR24180">
    <property type="entry name" value="CYCLIN-DEPENDENT KINASE INHIBITOR 2C-RELATED"/>
    <property type="match status" value="1"/>
</dbReference>
<dbReference type="PANTHER" id="PTHR24180:SF45">
    <property type="entry name" value="POLY [ADP-RIBOSE] POLYMERASE TANKYRASE"/>
    <property type="match status" value="1"/>
</dbReference>
<dbReference type="Pfam" id="PF12796">
    <property type="entry name" value="Ank_2"/>
    <property type="match status" value="1"/>
</dbReference>
<dbReference type="Pfam" id="PF09372">
    <property type="entry name" value="PRANC"/>
    <property type="match status" value="1"/>
</dbReference>
<dbReference type="SMART" id="SM00248">
    <property type="entry name" value="ANK"/>
    <property type="match status" value="3"/>
</dbReference>
<dbReference type="SUPFAM" id="SSF48403">
    <property type="entry name" value="Ankyrin repeat"/>
    <property type="match status" value="1"/>
</dbReference>
<dbReference type="PROSITE" id="PS50297">
    <property type="entry name" value="ANK_REP_REGION"/>
    <property type="match status" value="1"/>
</dbReference>
<dbReference type="PROSITE" id="PS50088">
    <property type="entry name" value="ANK_REPEAT"/>
    <property type="match status" value="1"/>
</dbReference>
<sequence length="437" mass="50734">MESVDFMAVDEQFHDDLDLWSLSLVDDYKKHGLGVDCYVLEPVVDRKIFDRFLLEPICDPVDVLYDYFRIHRDNIDQYIVDRLFAYITYKDIISALVSKNYMEDIFSIIIKNCNSVQDLLLYYLSNAYVEIDIVDLMVDHGAVIYKIECLNAYFRGICKKESSVVEFILNCGIPDENDVKLDLYKIIQYTRGFLVDEPTVLEIYKLCIPYIEDINQLDAGGRTLLYRAIYAGYIDLVSWLLENGANVNAVMSNGYTCLDVAVDRGSVIARREAHLKILEILLREPLSIDCIKLAILNNTIENHDVIKLCIKYFMMVDYSLCNVYASSLFDYIIDCKQELEYIRQMKIHNTTMYELIYNRDKNKHASHILHRYSKHPVLTQCITKGFKIYTEVTEQVTKALNRRALIDEIINNVSTDDNLLSKLPLEIRDLIVSQAVI</sequence>
<feature type="chain" id="PRO_0000457708" description="Ankyrin repeat domain-containing protein OPG015">
    <location>
        <begin position="1"/>
        <end position="437"/>
    </location>
</feature>
<feature type="repeat" description="ANK 1" evidence="1">
    <location>
        <begin position="117"/>
        <end position="146"/>
    </location>
</feature>
<feature type="repeat" description="ANK 2" evidence="1">
    <location>
        <begin position="220"/>
        <end position="249"/>
    </location>
</feature>
<feature type="repeat" description="ANK 3" evidence="1">
    <location>
        <begin position="253"/>
        <end position="290"/>
    </location>
</feature>
<name>PG015_MONPV</name>
<proteinExistence type="inferred from homology"/>
<evidence type="ECO:0000255" key="1"/>
<evidence type="ECO:0000305" key="2"/>
<reference key="1">
    <citation type="journal article" date="2022" name="J. Infect. Dis.">
        <title>Exportation of Monkeypox virus from the African continent.</title>
        <authorList>
            <person name="Mauldin M.R."/>
            <person name="McCollum A.M."/>
            <person name="Nakazawa Y.J."/>
            <person name="Mandra A."/>
            <person name="Whitehouse E.R."/>
            <person name="Davidson W."/>
            <person name="Zhao H."/>
            <person name="Gao J."/>
            <person name="Li Y."/>
            <person name="Doty J."/>
            <person name="Yinka-Ogunleye A."/>
            <person name="Akinpelu A."/>
            <person name="Aruna O."/>
            <person name="Naidoo D."/>
            <person name="Lewandowski K."/>
            <person name="Afrough B."/>
            <person name="Graham V."/>
            <person name="Aarons E."/>
            <person name="Hewson R."/>
            <person name="Vipond R."/>
            <person name="Dunning J."/>
            <person name="Chand M."/>
            <person name="Brown C."/>
            <person name="Cohen-Gihon I."/>
            <person name="Erez N."/>
            <person name="Shifman O."/>
            <person name="Israeli O."/>
            <person name="Sharon M."/>
            <person name="Schwartz E."/>
            <person name="Beth-Din A."/>
            <person name="Zvi A."/>
            <person name="Mak T.M."/>
            <person name="Ng Y.K."/>
            <person name="Cui L."/>
            <person name="Lin R.T.P."/>
            <person name="Olson V.A."/>
            <person name="Brooks T."/>
            <person name="Paran N."/>
            <person name="Ihekweazu C."/>
            <person name="Reynolds M.G."/>
        </authorList>
    </citation>
    <scope>NUCLEOTIDE SEQUENCE [LARGE SCALE GENOMIC DNA]</scope>
    <source>
        <strain>MPXV-M5312_HM12_Rivers</strain>
    </source>
</reference>
<comment type="function">
    <text evidence="2">May be involved in virus-host protein interaction through the ankyrin repeats.</text>
</comment>
<comment type="similarity">
    <text evidence="2">Belongs to the orthopoxvirus OPG015 family.</text>
</comment>
<organism>
    <name type="scientific">Monkeypox virus</name>
    <dbReference type="NCBI Taxonomy" id="10244"/>
    <lineage>
        <taxon>Viruses</taxon>
        <taxon>Varidnaviria</taxon>
        <taxon>Bamfordvirae</taxon>
        <taxon>Nucleocytoviricota</taxon>
        <taxon>Pokkesviricetes</taxon>
        <taxon>Chitovirales</taxon>
        <taxon>Poxviridae</taxon>
        <taxon>Chordopoxvirinae</taxon>
        <taxon>Orthopoxvirus</taxon>
    </lineage>
</organism>
<accession>A0A7H0DNG9</accession>
<organismHost>
    <name type="scientific">Cynomys gunnisoni</name>
    <name type="common">Gunnison's prairie dog</name>
    <name type="synonym">Spermophilus gunnisoni</name>
    <dbReference type="NCBI Taxonomy" id="45479"/>
</organismHost>
<organismHost>
    <name type="scientific">Cynomys leucurus</name>
    <name type="common">White-tailed prairie dog</name>
    <dbReference type="NCBI Taxonomy" id="99825"/>
</organismHost>
<organismHost>
    <name type="scientific">Cynomys ludovicianus</name>
    <name type="common">Black-tailed prairie dog</name>
    <dbReference type="NCBI Taxonomy" id="45480"/>
</organismHost>
<organismHost>
    <name type="scientific">Cynomys mexicanus</name>
    <name type="common">Mexican prairie dog</name>
    <dbReference type="NCBI Taxonomy" id="99826"/>
</organismHost>
<organismHost>
    <name type="scientific">Cynomys parvidens</name>
    <name type="common">Utah prairie dog</name>
    <dbReference type="NCBI Taxonomy" id="99827"/>
</organismHost>
<organismHost>
    <name type="scientific">Gliridae</name>
    <name type="common">dormice</name>
    <dbReference type="NCBI Taxonomy" id="30650"/>
</organismHost>
<organismHost>
    <name type="scientific">Heliosciurus ruwenzorii</name>
    <name type="common">Ruwenzori sun squirrel</name>
    <dbReference type="NCBI Taxonomy" id="226685"/>
</organismHost>
<organismHost>
    <name type="scientific">Homo sapiens</name>
    <name type="common">Human</name>
    <dbReference type="NCBI Taxonomy" id="9606"/>
</organismHost>
<organismHost>
    <name type="scientific">Mus musculus</name>
    <name type="common">Mouse</name>
    <dbReference type="NCBI Taxonomy" id="10090"/>
</organismHost>
<keyword id="KW-0040">ANK repeat</keyword>
<keyword id="KW-1185">Reference proteome</keyword>
<keyword id="KW-0677">Repeat</keyword>
<gene>
    <name type="primary">OPG015</name>
    <name type="ORF">MPXVgp004</name>
</gene>